<protein>
    <recommendedName>
        <fullName evidence="1">tRNA dimethylallyltransferase</fullName>
        <ecNumber evidence="1">2.5.1.75</ecNumber>
    </recommendedName>
    <alternativeName>
        <fullName evidence="1">Dimethylallyl diphosphate:tRNA dimethylallyltransferase</fullName>
        <shortName evidence="1">DMAPP:tRNA dimethylallyltransferase</shortName>
        <shortName evidence="1">DMATase</shortName>
    </alternativeName>
    <alternativeName>
        <fullName evidence="1">Isopentenyl-diphosphate:tRNA isopentenyltransferase</fullName>
        <shortName evidence="1">IPP transferase</shortName>
        <shortName evidence="1">IPPT</shortName>
        <shortName evidence="1">IPTase</shortName>
    </alternativeName>
</protein>
<gene>
    <name evidence="1" type="primary">miaA</name>
    <name type="ordered locus">LACR_0647</name>
</gene>
<proteinExistence type="inferred from homology"/>
<sequence>MKNNKVLVVVGPTAVGKTALGIDLAIKMNGEIISGDSQQVYQGLDIGTAKVTKAEQALAVHHLIDVRKWTENFSVHDFVMEANRLIKEIIERGNVPIIVGGTGLYIQSLIEGYHLGGQKNHQAMMELRETLSALTDEELFEKVLKLNPNFPELNRRRAIRFLELQTFGSTDENSGSDYNFLLIGLNAERKVLYERINQRVEQMMSEGLLAEARTLFEKAPDAQAAKGIGYKEFFPYFSGEISLEDAVELVKRNSRRYAKRQLTWFRNRMEVEFEDVFSETYPDSVFEKVTQFLN</sequence>
<feature type="chain" id="PRO_1000020615" description="tRNA dimethylallyltransferase">
    <location>
        <begin position="1"/>
        <end position="294"/>
    </location>
</feature>
<feature type="region of interest" description="Interaction with substrate tRNA" evidence="1">
    <location>
        <begin position="36"/>
        <end position="39"/>
    </location>
</feature>
<feature type="binding site" evidence="1">
    <location>
        <begin position="11"/>
        <end position="18"/>
    </location>
    <ligand>
        <name>ATP</name>
        <dbReference type="ChEBI" id="CHEBI:30616"/>
    </ligand>
</feature>
<feature type="binding site" evidence="1">
    <location>
        <begin position="13"/>
        <end position="18"/>
    </location>
    <ligand>
        <name>substrate</name>
    </ligand>
</feature>
<feature type="site" description="Interaction with substrate tRNA" evidence="1">
    <location>
        <position position="102"/>
    </location>
</feature>
<evidence type="ECO:0000255" key="1">
    <source>
        <dbReference type="HAMAP-Rule" id="MF_00185"/>
    </source>
</evidence>
<organism>
    <name type="scientific">Lactococcus lactis subsp. cremoris (strain SK11)</name>
    <dbReference type="NCBI Taxonomy" id="272622"/>
    <lineage>
        <taxon>Bacteria</taxon>
        <taxon>Bacillati</taxon>
        <taxon>Bacillota</taxon>
        <taxon>Bacilli</taxon>
        <taxon>Lactobacillales</taxon>
        <taxon>Streptococcaceae</taxon>
        <taxon>Lactococcus</taxon>
        <taxon>Lactococcus cremoris subsp. cremoris</taxon>
    </lineage>
</organism>
<dbReference type="EC" id="2.5.1.75" evidence="1"/>
<dbReference type="EMBL" id="CP000425">
    <property type="protein sequence ID" value="ABJ72214.1"/>
    <property type="molecule type" value="Genomic_DNA"/>
</dbReference>
<dbReference type="RefSeq" id="WP_011675766.1">
    <property type="nucleotide sequence ID" value="NC_008527.1"/>
</dbReference>
<dbReference type="SMR" id="Q031A8"/>
<dbReference type="KEGG" id="llc:LACR_0647"/>
<dbReference type="HOGENOM" id="CLU_032616_0_1_9"/>
<dbReference type="Proteomes" id="UP000000240">
    <property type="component" value="Chromosome"/>
</dbReference>
<dbReference type="GO" id="GO:0005524">
    <property type="term" value="F:ATP binding"/>
    <property type="evidence" value="ECO:0007669"/>
    <property type="project" value="UniProtKB-UniRule"/>
</dbReference>
<dbReference type="GO" id="GO:0052381">
    <property type="term" value="F:tRNA dimethylallyltransferase activity"/>
    <property type="evidence" value="ECO:0007669"/>
    <property type="project" value="UniProtKB-UniRule"/>
</dbReference>
<dbReference type="GO" id="GO:0006400">
    <property type="term" value="P:tRNA modification"/>
    <property type="evidence" value="ECO:0007669"/>
    <property type="project" value="TreeGrafter"/>
</dbReference>
<dbReference type="Gene3D" id="3.40.50.300">
    <property type="entry name" value="P-loop containing nucleotide triphosphate hydrolases"/>
    <property type="match status" value="1"/>
</dbReference>
<dbReference type="HAMAP" id="MF_00185">
    <property type="entry name" value="IPP_trans"/>
    <property type="match status" value="1"/>
</dbReference>
<dbReference type="InterPro" id="IPR039657">
    <property type="entry name" value="Dimethylallyltransferase"/>
</dbReference>
<dbReference type="InterPro" id="IPR018022">
    <property type="entry name" value="IPT"/>
</dbReference>
<dbReference type="InterPro" id="IPR027417">
    <property type="entry name" value="P-loop_NTPase"/>
</dbReference>
<dbReference type="NCBIfam" id="TIGR00174">
    <property type="entry name" value="miaA"/>
    <property type="match status" value="1"/>
</dbReference>
<dbReference type="PANTHER" id="PTHR11088">
    <property type="entry name" value="TRNA DIMETHYLALLYLTRANSFERASE"/>
    <property type="match status" value="1"/>
</dbReference>
<dbReference type="PANTHER" id="PTHR11088:SF60">
    <property type="entry name" value="TRNA DIMETHYLALLYLTRANSFERASE"/>
    <property type="match status" value="1"/>
</dbReference>
<dbReference type="Pfam" id="PF01715">
    <property type="entry name" value="IPPT"/>
    <property type="match status" value="1"/>
</dbReference>
<dbReference type="SUPFAM" id="SSF52540">
    <property type="entry name" value="P-loop containing nucleoside triphosphate hydrolases"/>
    <property type="match status" value="1"/>
</dbReference>
<comment type="function">
    <text evidence="1">Catalyzes the transfer of a dimethylallyl group onto the adenine at position 37 in tRNAs that read codons beginning with uridine, leading to the formation of N6-(dimethylallyl)adenosine (i(6)A).</text>
</comment>
<comment type="catalytic activity">
    <reaction evidence="1">
        <text>adenosine(37) in tRNA + dimethylallyl diphosphate = N(6)-dimethylallyladenosine(37) in tRNA + diphosphate</text>
        <dbReference type="Rhea" id="RHEA:26482"/>
        <dbReference type="Rhea" id="RHEA-COMP:10162"/>
        <dbReference type="Rhea" id="RHEA-COMP:10375"/>
        <dbReference type="ChEBI" id="CHEBI:33019"/>
        <dbReference type="ChEBI" id="CHEBI:57623"/>
        <dbReference type="ChEBI" id="CHEBI:74411"/>
        <dbReference type="ChEBI" id="CHEBI:74415"/>
        <dbReference type="EC" id="2.5.1.75"/>
    </reaction>
</comment>
<comment type="cofactor">
    <cofactor evidence="1">
        <name>Mg(2+)</name>
        <dbReference type="ChEBI" id="CHEBI:18420"/>
    </cofactor>
</comment>
<comment type="subunit">
    <text evidence="1">Monomer.</text>
</comment>
<comment type="similarity">
    <text evidence="1">Belongs to the IPP transferase family.</text>
</comment>
<reference key="1">
    <citation type="journal article" date="2006" name="Proc. Natl. Acad. Sci. U.S.A.">
        <title>Comparative genomics of the lactic acid bacteria.</title>
        <authorList>
            <person name="Makarova K.S."/>
            <person name="Slesarev A."/>
            <person name="Wolf Y.I."/>
            <person name="Sorokin A."/>
            <person name="Mirkin B."/>
            <person name="Koonin E.V."/>
            <person name="Pavlov A."/>
            <person name="Pavlova N."/>
            <person name="Karamychev V."/>
            <person name="Polouchine N."/>
            <person name="Shakhova V."/>
            <person name="Grigoriev I."/>
            <person name="Lou Y."/>
            <person name="Rohksar D."/>
            <person name="Lucas S."/>
            <person name="Huang K."/>
            <person name="Goodstein D.M."/>
            <person name="Hawkins T."/>
            <person name="Plengvidhya V."/>
            <person name="Welker D."/>
            <person name="Hughes J."/>
            <person name="Goh Y."/>
            <person name="Benson A."/>
            <person name="Baldwin K."/>
            <person name="Lee J.-H."/>
            <person name="Diaz-Muniz I."/>
            <person name="Dosti B."/>
            <person name="Smeianov V."/>
            <person name="Wechter W."/>
            <person name="Barabote R."/>
            <person name="Lorca G."/>
            <person name="Altermann E."/>
            <person name="Barrangou R."/>
            <person name="Ganesan B."/>
            <person name="Xie Y."/>
            <person name="Rawsthorne H."/>
            <person name="Tamir D."/>
            <person name="Parker C."/>
            <person name="Breidt F."/>
            <person name="Broadbent J.R."/>
            <person name="Hutkins R."/>
            <person name="O'Sullivan D."/>
            <person name="Steele J."/>
            <person name="Unlu G."/>
            <person name="Saier M.H. Jr."/>
            <person name="Klaenhammer T."/>
            <person name="Richardson P."/>
            <person name="Kozyavkin S."/>
            <person name="Weimer B.C."/>
            <person name="Mills D.A."/>
        </authorList>
    </citation>
    <scope>NUCLEOTIDE SEQUENCE [LARGE SCALE GENOMIC DNA]</scope>
    <source>
        <strain>SK11</strain>
    </source>
</reference>
<accession>Q031A8</accession>
<keyword id="KW-0067">ATP-binding</keyword>
<keyword id="KW-0460">Magnesium</keyword>
<keyword id="KW-0547">Nucleotide-binding</keyword>
<keyword id="KW-0808">Transferase</keyword>
<keyword id="KW-0819">tRNA processing</keyword>
<name>MIAA_LACLS</name>